<keyword id="KW-0963">Cytoplasm</keyword>
<keyword id="KW-1185">Reference proteome</keyword>
<name>OCA5_CANGA</name>
<feature type="chain" id="PRO_0000408209" description="Oxidant-induced cell-cycle arrest protein 5">
    <location>
        <begin position="1"/>
        <end position="604"/>
    </location>
</feature>
<feature type="domain" description="Rab-GAP TBC" evidence="2">
    <location>
        <begin position="41"/>
        <end position="386"/>
    </location>
</feature>
<dbReference type="EMBL" id="CR380951">
    <property type="protein sequence ID" value="CAG58770.1"/>
    <property type="molecule type" value="Genomic_DNA"/>
</dbReference>
<dbReference type="RefSeq" id="XP_445851.1">
    <property type="nucleotide sequence ID" value="XM_445851.1"/>
</dbReference>
<dbReference type="FunCoup" id="Q6FV93">
    <property type="interactions" value="56"/>
</dbReference>
<dbReference type="STRING" id="284593.Q6FV93"/>
<dbReference type="EnsemblFungi" id="CAGL0E03784g-T">
    <property type="protein sequence ID" value="CAGL0E03784g-T-p1"/>
    <property type="gene ID" value="CAGL0E03784g"/>
</dbReference>
<dbReference type="KEGG" id="cgr:2887305"/>
<dbReference type="CGD" id="CAL0129140">
    <property type="gene designation" value="CAGL0E03784g"/>
</dbReference>
<dbReference type="VEuPathDB" id="FungiDB:B1J91_E03784g"/>
<dbReference type="VEuPathDB" id="FungiDB:CAGL0E03784g"/>
<dbReference type="eggNOG" id="ENOG502QVXN">
    <property type="taxonomic scope" value="Eukaryota"/>
</dbReference>
<dbReference type="HOGENOM" id="CLU_028817_0_0_1"/>
<dbReference type="InParanoid" id="Q6FV93"/>
<dbReference type="OMA" id="LRFKVWP"/>
<dbReference type="Proteomes" id="UP000002428">
    <property type="component" value="Chromosome E"/>
</dbReference>
<dbReference type="GO" id="GO:0005737">
    <property type="term" value="C:cytoplasm"/>
    <property type="evidence" value="ECO:0007669"/>
    <property type="project" value="UniProtKB-SubCell"/>
</dbReference>
<dbReference type="Gene3D" id="1.10.472.80">
    <property type="entry name" value="Ypt/Rab-GAP domain of gyp1p, domain 3"/>
    <property type="match status" value="1"/>
</dbReference>
<dbReference type="InterPro" id="IPR000195">
    <property type="entry name" value="Rab-GAP-TBC_dom"/>
</dbReference>
<dbReference type="InterPro" id="IPR035969">
    <property type="entry name" value="Rab-GAP_TBC_sf"/>
</dbReference>
<dbReference type="SMART" id="SM00164">
    <property type="entry name" value="TBC"/>
    <property type="match status" value="1"/>
</dbReference>
<dbReference type="SUPFAM" id="SSF47923">
    <property type="entry name" value="Ypt/Rab-GAP domain of gyp1p"/>
    <property type="match status" value="1"/>
</dbReference>
<dbReference type="PROSITE" id="PS50086">
    <property type="entry name" value="TBC_RABGAP"/>
    <property type="match status" value="1"/>
</dbReference>
<gene>
    <name type="primary">OCA5</name>
    <name type="ordered locus">CAGL0E03784g</name>
</gene>
<sequence length="604" mass="69449">MSKSLKHIKQQCRDRELVQEVIELVRRNDHDSLAYVARTLGIPPQLRFVVWPILLKYHPMCISPNIMSNTVVWDPLTSSYHLTNADAAQDVNSSGYVANGAANGSANGYEISKTSTNSSTSDDVVNEDMVHLEKIILKDLRKYFHSRATSSSQAVSSSSSSTAEPSSPTVSDECEIIDSLKNAILRFLSKWSRIFKYEIGLAWLALGLAEWFPALLPAKFDLNDECFLVLNGRRHAHTSSGNNNSTSISQLFQEYPLLDYLKNKLPSERLFTFDQLYERLLLVLIHSPDTALEQNKIKRDFPQDSTHISNYFPVISGGDLSFRTQIFFKVFSTILPELYQPLIEEVNLQPNSSRTSWLYWWFKCAGARSLQRQDRGRIWDLFLGWRPKPDHVTINFYLNYNTKSFAHLYHKSPSICHSKFWNKYEKNDTFWFPDLDSIPLGTPPYTHDVTIIKELLRRNKYEERASDSNDTDQECCMNSIPFSIISPHTQLIFIYVAILQFNEFKLLEFEETEIAEFLNNVPMLSKADDTAFKKLFDTGSTLDNVVLHDEASKRPSSSSNNHMLIEVGSDGKSSHSFNDLMKMAGDIWRKWLWRELEENLNNEP</sequence>
<protein>
    <recommendedName>
        <fullName>Oxidant-induced cell-cycle arrest protein 5</fullName>
    </recommendedName>
</protein>
<evidence type="ECO:0000250" key="1"/>
<evidence type="ECO:0000255" key="2">
    <source>
        <dbReference type="PROSITE-ProRule" id="PRU00163"/>
    </source>
</evidence>
<evidence type="ECO:0000305" key="3"/>
<reference key="1">
    <citation type="journal article" date="2004" name="Nature">
        <title>Genome evolution in yeasts.</title>
        <authorList>
            <person name="Dujon B."/>
            <person name="Sherman D."/>
            <person name="Fischer G."/>
            <person name="Durrens P."/>
            <person name="Casaregola S."/>
            <person name="Lafontaine I."/>
            <person name="de Montigny J."/>
            <person name="Marck C."/>
            <person name="Neuveglise C."/>
            <person name="Talla E."/>
            <person name="Goffard N."/>
            <person name="Frangeul L."/>
            <person name="Aigle M."/>
            <person name="Anthouard V."/>
            <person name="Babour A."/>
            <person name="Barbe V."/>
            <person name="Barnay S."/>
            <person name="Blanchin S."/>
            <person name="Beckerich J.-M."/>
            <person name="Beyne E."/>
            <person name="Bleykasten C."/>
            <person name="Boisrame A."/>
            <person name="Boyer J."/>
            <person name="Cattolico L."/>
            <person name="Confanioleri F."/>
            <person name="de Daruvar A."/>
            <person name="Despons L."/>
            <person name="Fabre E."/>
            <person name="Fairhead C."/>
            <person name="Ferry-Dumazet H."/>
            <person name="Groppi A."/>
            <person name="Hantraye F."/>
            <person name="Hennequin C."/>
            <person name="Jauniaux N."/>
            <person name="Joyet P."/>
            <person name="Kachouri R."/>
            <person name="Kerrest A."/>
            <person name="Koszul R."/>
            <person name="Lemaire M."/>
            <person name="Lesur I."/>
            <person name="Ma L."/>
            <person name="Muller H."/>
            <person name="Nicaud J.-M."/>
            <person name="Nikolski M."/>
            <person name="Oztas S."/>
            <person name="Ozier-Kalogeropoulos O."/>
            <person name="Pellenz S."/>
            <person name="Potier S."/>
            <person name="Richard G.-F."/>
            <person name="Straub M.-L."/>
            <person name="Suleau A."/>
            <person name="Swennen D."/>
            <person name="Tekaia F."/>
            <person name="Wesolowski-Louvel M."/>
            <person name="Westhof E."/>
            <person name="Wirth B."/>
            <person name="Zeniou-Meyer M."/>
            <person name="Zivanovic Y."/>
            <person name="Bolotin-Fukuhara M."/>
            <person name="Thierry A."/>
            <person name="Bouchier C."/>
            <person name="Caudron B."/>
            <person name="Scarpelli C."/>
            <person name="Gaillardin C."/>
            <person name="Weissenbach J."/>
            <person name="Wincker P."/>
            <person name="Souciet J.-L."/>
        </authorList>
    </citation>
    <scope>NUCLEOTIDE SEQUENCE [LARGE SCALE GENOMIC DNA]</scope>
    <source>
        <strain>ATCC 2001 / BCRC 20586 / JCM 3761 / NBRC 0622 / NRRL Y-65 / CBS 138</strain>
    </source>
</reference>
<proteinExistence type="inferred from homology"/>
<accession>Q6FV93</accession>
<comment type="subcellular location">
    <subcellularLocation>
        <location evidence="1">Cytoplasm</location>
    </subcellularLocation>
</comment>
<comment type="similarity">
    <text evidence="3">Belongs to the OCA5 family.</text>
</comment>
<organism>
    <name type="scientific">Candida glabrata (strain ATCC 2001 / BCRC 20586 / JCM 3761 / NBRC 0622 / NRRL Y-65 / CBS 138)</name>
    <name type="common">Yeast</name>
    <name type="synonym">Nakaseomyces glabratus</name>
    <dbReference type="NCBI Taxonomy" id="284593"/>
    <lineage>
        <taxon>Eukaryota</taxon>
        <taxon>Fungi</taxon>
        <taxon>Dikarya</taxon>
        <taxon>Ascomycota</taxon>
        <taxon>Saccharomycotina</taxon>
        <taxon>Saccharomycetes</taxon>
        <taxon>Saccharomycetales</taxon>
        <taxon>Saccharomycetaceae</taxon>
        <taxon>Nakaseomyces</taxon>
    </lineage>
</organism>